<dbReference type="EMBL" id="AF320574">
    <property type="protein sequence ID" value="AAG40876.1"/>
    <property type="molecule type" value="Genomic_DNA"/>
</dbReference>
<dbReference type="SMR" id="Q9G3T7"/>
<dbReference type="GO" id="GO:0005743">
    <property type="term" value="C:mitochondrial inner membrane"/>
    <property type="evidence" value="ECO:0007669"/>
    <property type="project" value="UniProtKB-SubCell"/>
</dbReference>
<dbReference type="GO" id="GO:0045275">
    <property type="term" value="C:respiratory chain complex III"/>
    <property type="evidence" value="ECO:0007669"/>
    <property type="project" value="InterPro"/>
</dbReference>
<dbReference type="GO" id="GO:0046872">
    <property type="term" value="F:metal ion binding"/>
    <property type="evidence" value="ECO:0007669"/>
    <property type="project" value="UniProtKB-KW"/>
</dbReference>
<dbReference type="GO" id="GO:0008121">
    <property type="term" value="F:ubiquinol-cytochrome-c reductase activity"/>
    <property type="evidence" value="ECO:0007669"/>
    <property type="project" value="InterPro"/>
</dbReference>
<dbReference type="GO" id="GO:0006122">
    <property type="term" value="P:mitochondrial electron transport, ubiquinol to cytochrome c"/>
    <property type="evidence" value="ECO:0007669"/>
    <property type="project" value="TreeGrafter"/>
</dbReference>
<dbReference type="CDD" id="cd00290">
    <property type="entry name" value="cytochrome_b_C"/>
    <property type="match status" value="1"/>
</dbReference>
<dbReference type="CDD" id="cd00284">
    <property type="entry name" value="Cytochrome_b_N"/>
    <property type="match status" value="1"/>
</dbReference>
<dbReference type="FunFam" id="1.20.810.10:FF:000002">
    <property type="entry name" value="Cytochrome b"/>
    <property type="match status" value="1"/>
</dbReference>
<dbReference type="Gene3D" id="1.20.810.10">
    <property type="entry name" value="Cytochrome Bc1 Complex, Chain C"/>
    <property type="match status" value="1"/>
</dbReference>
<dbReference type="InterPro" id="IPR005798">
    <property type="entry name" value="Cyt_b/b6_C"/>
</dbReference>
<dbReference type="InterPro" id="IPR036150">
    <property type="entry name" value="Cyt_b/b6_C_sf"/>
</dbReference>
<dbReference type="InterPro" id="IPR005797">
    <property type="entry name" value="Cyt_b/b6_N"/>
</dbReference>
<dbReference type="InterPro" id="IPR027387">
    <property type="entry name" value="Cytb/b6-like_sf"/>
</dbReference>
<dbReference type="InterPro" id="IPR030689">
    <property type="entry name" value="Cytochrome_b"/>
</dbReference>
<dbReference type="InterPro" id="IPR048260">
    <property type="entry name" value="Cytochrome_b_C_euk/bac"/>
</dbReference>
<dbReference type="InterPro" id="IPR048259">
    <property type="entry name" value="Cytochrome_b_N_euk/bac"/>
</dbReference>
<dbReference type="InterPro" id="IPR016174">
    <property type="entry name" value="Di-haem_cyt_TM"/>
</dbReference>
<dbReference type="PANTHER" id="PTHR19271">
    <property type="entry name" value="CYTOCHROME B"/>
    <property type="match status" value="1"/>
</dbReference>
<dbReference type="PANTHER" id="PTHR19271:SF16">
    <property type="entry name" value="CYTOCHROME B"/>
    <property type="match status" value="1"/>
</dbReference>
<dbReference type="Pfam" id="PF00032">
    <property type="entry name" value="Cytochrom_B_C"/>
    <property type="match status" value="1"/>
</dbReference>
<dbReference type="Pfam" id="PF00033">
    <property type="entry name" value="Cytochrome_B"/>
    <property type="match status" value="1"/>
</dbReference>
<dbReference type="PIRSF" id="PIRSF038885">
    <property type="entry name" value="COB"/>
    <property type="match status" value="1"/>
</dbReference>
<dbReference type="SUPFAM" id="SSF81648">
    <property type="entry name" value="a domain/subunit of cytochrome bc1 complex (Ubiquinol-cytochrome c reductase)"/>
    <property type="match status" value="1"/>
</dbReference>
<dbReference type="SUPFAM" id="SSF81342">
    <property type="entry name" value="Transmembrane di-heme cytochromes"/>
    <property type="match status" value="1"/>
</dbReference>
<dbReference type="PROSITE" id="PS51003">
    <property type="entry name" value="CYTB_CTER"/>
    <property type="match status" value="1"/>
</dbReference>
<dbReference type="PROSITE" id="PS51002">
    <property type="entry name" value="CYTB_NTER"/>
    <property type="match status" value="1"/>
</dbReference>
<keyword id="KW-0249">Electron transport</keyword>
<keyword id="KW-0349">Heme</keyword>
<keyword id="KW-0408">Iron</keyword>
<keyword id="KW-0472">Membrane</keyword>
<keyword id="KW-0479">Metal-binding</keyword>
<keyword id="KW-0496">Mitochondrion</keyword>
<keyword id="KW-0999">Mitochondrion inner membrane</keyword>
<keyword id="KW-0679">Respiratory chain</keyword>
<keyword id="KW-0812">Transmembrane</keyword>
<keyword id="KW-1133">Transmembrane helix</keyword>
<keyword id="KW-0813">Transport</keyword>
<keyword id="KW-0830">Ubiquinone</keyword>
<comment type="function">
    <text evidence="2">Component of the ubiquinol-cytochrome c reductase complex (complex III or cytochrome b-c1 complex) that is part of the mitochondrial respiratory chain. The b-c1 complex mediates electron transfer from ubiquinol to cytochrome c. Contributes to the generation of a proton gradient across the mitochondrial membrane that is then used for ATP synthesis.</text>
</comment>
<comment type="cofactor">
    <cofactor evidence="2">
        <name>heme b</name>
        <dbReference type="ChEBI" id="CHEBI:60344"/>
    </cofactor>
    <text evidence="2">Binds 2 heme b groups non-covalently.</text>
</comment>
<comment type="subunit">
    <text evidence="2">The cytochrome bc1 complex contains 11 subunits: 3 respiratory subunits (MT-CYB, CYC1 and UQCRFS1), 2 core proteins (UQCRC1 and UQCRC2) and 6 low-molecular weight proteins (UQCRH/QCR6, UQCRB/QCR7, UQCRQ/QCR8, UQCR10/QCR9, UQCR11/QCR10 and a cleavage product of UQCRFS1). This cytochrome bc1 complex then forms a dimer.</text>
</comment>
<comment type="subcellular location">
    <subcellularLocation>
        <location evidence="2">Mitochondrion inner membrane</location>
        <topology evidence="2">Multi-pass membrane protein</topology>
    </subcellularLocation>
</comment>
<comment type="miscellaneous">
    <text evidence="1">Heme 1 (or BL or b562) is low-potential and absorbs at about 562 nm, and heme 2 (or BH or b566) is high-potential and absorbs at about 566 nm.</text>
</comment>
<comment type="similarity">
    <text evidence="3 4">Belongs to the cytochrome b family.</text>
</comment>
<comment type="caution">
    <text evidence="2">The full-length protein contains only eight transmembrane helices, not nine as predicted by bioinformatics tools.</text>
</comment>
<feature type="chain" id="PRO_0000061331" description="Cytochrome b">
    <location>
        <begin position="1"/>
        <end position="379"/>
    </location>
</feature>
<feature type="transmembrane region" description="Helical" evidence="2">
    <location>
        <begin position="33"/>
        <end position="53"/>
    </location>
</feature>
<feature type="transmembrane region" description="Helical" evidence="2">
    <location>
        <begin position="77"/>
        <end position="98"/>
    </location>
</feature>
<feature type="transmembrane region" description="Helical" evidence="2">
    <location>
        <begin position="113"/>
        <end position="133"/>
    </location>
</feature>
<feature type="transmembrane region" description="Helical" evidence="2">
    <location>
        <begin position="178"/>
        <end position="198"/>
    </location>
</feature>
<feature type="transmembrane region" description="Helical" evidence="2">
    <location>
        <begin position="226"/>
        <end position="246"/>
    </location>
</feature>
<feature type="transmembrane region" description="Helical" evidence="2">
    <location>
        <begin position="288"/>
        <end position="308"/>
    </location>
</feature>
<feature type="transmembrane region" description="Helical" evidence="2">
    <location>
        <begin position="320"/>
        <end position="340"/>
    </location>
</feature>
<feature type="transmembrane region" description="Helical" evidence="2">
    <location>
        <begin position="347"/>
        <end position="367"/>
    </location>
</feature>
<feature type="binding site" description="axial binding residue" evidence="2">
    <location>
        <position position="83"/>
    </location>
    <ligand>
        <name>heme b</name>
        <dbReference type="ChEBI" id="CHEBI:60344"/>
        <label>b562</label>
    </ligand>
    <ligandPart>
        <name>Fe</name>
        <dbReference type="ChEBI" id="CHEBI:18248"/>
    </ligandPart>
</feature>
<feature type="binding site" description="axial binding residue" evidence="2">
    <location>
        <position position="97"/>
    </location>
    <ligand>
        <name>heme b</name>
        <dbReference type="ChEBI" id="CHEBI:60344"/>
        <label>b566</label>
    </ligand>
    <ligandPart>
        <name>Fe</name>
        <dbReference type="ChEBI" id="CHEBI:18248"/>
    </ligandPart>
</feature>
<feature type="binding site" description="axial binding residue" evidence="2">
    <location>
        <position position="182"/>
    </location>
    <ligand>
        <name>heme b</name>
        <dbReference type="ChEBI" id="CHEBI:60344"/>
        <label>b562</label>
    </ligand>
    <ligandPart>
        <name>Fe</name>
        <dbReference type="ChEBI" id="CHEBI:18248"/>
    </ligandPart>
</feature>
<feature type="binding site" description="axial binding residue" evidence="2">
    <location>
        <position position="196"/>
    </location>
    <ligand>
        <name>heme b</name>
        <dbReference type="ChEBI" id="CHEBI:60344"/>
        <label>b566</label>
    </ligand>
    <ligandPart>
        <name>Fe</name>
        <dbReference type="ChEBI" id="CHEBI:18248"/>
    </ligandPart>
</feature>
<feature type="binding site" evidence="2">
    <location>
        <position position="201"/>
    </location>
    <ligand>
        <name>a ubiquinone</name>
        <dbReference type="ChEBI" id="CHEBI:16389"/>
    </ligand>
</feature>
<evidence type="ECO:0000250" key="1"/>
<evidence type="ECO:0000250" key="2">
    <source>
        <dbReference type="UniProtKB" id="P00157"/>
    </source>
</evidence>
<evidence type="ECO:0000255" key="3">
    <source>
        <dbReference type="PROSITE-ProRule" id="PRU00967"/>
    </source>
</evidence>
<evidence type="ECO:0000255" key="4">
    <source>
        <dbReference type="PROSITE-ProRule" id="PRU00968"/>
    </source>
</evidence>
<gene>
    <name type="primary">MT-CYB</name>
    <name type="synonym">COB</name>
    <name type="synonym">CYTB</name>
    <name type="synonym">MTCYB</name>
</gene>
<reference key="1">
    <citation type="journal article" date="2001" name="J. Mammal. Evol.">
        <title>Molecular systematics and phylogenetics of the reduncini (Artiodactyla: Bovidae) inferred from the analysis of mitochondrial cytochrome b gene sequences.</title>
        <authorList>
            <person name="Birungi J."/>
            <person name="Arctander P."/>
        </authorList>
    </citation>
    <scope>NUCLEOTIDE SEQUENCE [GENOMIC DNA]</scope>
</reference>
<accession>Q9G3T7</accession>
<organism>
    <name type="scientific">Ourebia ourebi</name>
    <name type="common">Oribi</name>
    <dbReference type="NCBI Taxonomy" id="59536"/>
    <lineage>
        <taxon>Eukaryota</taxon>
        <taxon>Metazoa</taxon>
        <taxon>Chordata</taxon>
        <taxon>Craniata</taxon>
        <taxon>Vertebrata</taxon>
        <taxon>Euteleostomi</taxon>
        <taxon>Mammalia</taxon>
        <taxon>Eutheria</taxon>
        <taxon>Laurasiatheria</taxon>
        <taxon>Artiodactyla</taxon>
        <taxon>Ruminantia</taxon>
        <taxon>Pecora</taxon>
        <taxon>Bovidae</taxon>
        <taxon>Antilopinae</taxon>
        <taxon>Ourebia</taxon>
    </lineage>
</organism>
<protein>
    <recommendedName>
        <fullName>Cytochrome b</fullName>
    </recommendedName>
    <alternativeName>
        <fullName>Complex III subunit 3</fullName>
    </alternativeName>
    <alternativeName>
        <fullName>Complex III subunit III</fullName>
    </alternativeName>
    <alternativeName>
        <fullName>Cytochrome b-c1 complex subunit 3</fullName>
    </alternativeName>
    <alternativeName>
        <fullName>Ubiquinol-cytochrome-c reductase complex cytochrome b subunit</fullName>
    </alternativeName>
</protein>
<sequence>MTNIRKTHPLMKIVNNAFIDLPAPSNISSWWNFGSLLGICLILQILTGLFLAMHYTADTATAFSSVTHICRDVNYGWIIRYMHANGASMFFICLFMHVGRGIYYGSYTFLETWNIGVILLFATMATAFMGYVLPWGQMSFWGATVITNLLSAIPYIGTNLVEWIWGGFSVDKATLTRFFAFHFILPFIIAALATVHLLFLHETGSNNPTGISSDADKVPFHPYYTIKDILGAFLLILALMLLVLFTPDLLGDPDNYTPANPLNTPPHIKPEWYFLFAYAILRSIPNKLGGVLALVLSILILVLMPLLHTSKQRSMMFRPVSQCLFWILVADLLTLTWIGGQPVEHPYIIIGQLASIMYFLLILVLMPAASTIENNLLKW</sequence>
<proteinExistence type="inferred from homology"/>
<name>CYB_OUROU</name>
<geneLocation type="mitochondrion"/>